<gene>
    <name evidence="1" type="primary">obg</name>
    <name type="ordered locus">Nmul_A1817</name>
</gene>
<accession>Q2Y807</accession>
<reference key="1">
    <citation type="submission" date="2005-08" db="EMBL/GenBank/DDBJ databases">
        <title>Complete sequence of chromosome 1 of Nitrosospira multiformis ATCC 25196.</title>
        <authorList>
            <person name="Copeland A."/>
            <person name="Lucas S."/>
            <person name="Lapidus A."/>
            <person name="Barry K."/>
            <person name="Detter J.C."/>
            <person name="Glavina T."/>
            <person name="Hammon N."/>
            <person name="Israni S."/>
            <person name="Pitluck S."/>
            <person name="Chain P."/>
            <person name="Malfatti S."/>
            <person name="Shin M."/>
            <person name="Vergez L."/>
            <person name="Schmutz J."/>
            <person name="Larimer F."/>
            <person name="Land M."/>
            <person name="Hauser L."/>
            <person name="Kyrpides N."/>
            <person name="Lykidis A."/>
            <person name="Richardson P."/>
        </authorList>
    </citation>
    <scope>NUCLEOTIDE SEQUENCE [LARGE SCALE GENOMIC DNA]</scope>
    <source>
        <strain>ATCC 25196 / NCIMB 11849 / C 71</strain>
    </source>
</reference>
<comment type="function">
    <text evidence="1">An essential GTPase which binds GTP, GDP and possibly (p)ppGpp with moderate affinity, with high nucleotide exchange rates and a fairly low GTP hydrolysis rate. Plays a role in control of the cell cycle, stress response, ribosome biogenesis and in those bacteria that undergo differentiation, in morphogenesis control.</text>
</comment>
<comment type="cofactor">
    <cofactor evidence="1">
        <name>Mg(2+)</name>
        <dbReference type="ChEBI" id="CHEBI:18420"/>
    </cofactor>
</comment>
<comment type="subunit">
    <text evidence="1">Monomer.</text>
</comment>
<comment type="subcellular location">
    <subcellularLocation>
        <location evidence="1">Cytoplasm</location>
    </subcellularLocation>
</comment>
<comment type="similarity">
    <text evidence="1">Belongs to the TRAFAC class OBG-HflX-like GTPase superfamily. OBG GTPase family.</text>
</comment>
<organism>
    <name type="scientific">Nitrosospira multiformis (strain ATCC 25196 / NCIMB 11849 / C 71)</name>
    <dbReference type="NCBI Taxonomy" id="323848"/>
    <lineage>
        <taxon>Bacteria</taxon>
        <taxon>Pseudomonadati</taxon>
        <taxon>Pseudomonadota</taxon>
        <taxon>Betaproteobacteria</taxon>
        <taxon>Nitrosomonadales</taxon>
        <taxon>Nitrosomonadaceae</taxon>
        <taxon>Nitrosospira</taxon>
    </lineage>
</organism>
<feature type="chain" id="PRO_0000386094" description="GTPase Obg">
    <location>
        <begin position="1"/>
        <end position="354"/>
    </location>
</feature>
<feature type="domain" description="Obg" evidence="2">
    <location>
        <begin position="1"/>
        <end position="159"/>
    </location>
</feature>
<feature type="domain" description="OBG-type G" evidence="1">
    <location>
        <begin position="160"/>
        <end position="334"/>
    </location>
</feature>
<feature type="binding site" evidence="1">
    <location>
        <begin position="166"/>
        <end position="173"/>
    </location>
    <ligand>
        <name>GTP</name>
        <dbReference type="ChEBI" id="CHEBI:37565"/>
    </ligand>
</feature>
<feature type="binding site" evidence="1">
    <location>
        <position position="173"/>
    </location>
    <ligand>
        <name>Mg(2+)</name>
        <dbReference type="ChEBI" id="CHEBI:18420"/>
    </ligand>
</feature>
<feature type="binding site" evidence="1">
    <location>
        <begin position="191"/>
        <end position="195"/>
    </location>
    <ligand>
        <name>GTP</name>
        <dbReference type="ChEBI" id="CHEBI:37565"/>
    </ligand>
</feature>
<feature type="binding site" evidence="1">
    <location>
        <position position="193"/>
    </location>
    <ligand>
        <name>Mg(2+)</name>
        <dbReference type="ChEBI" id="CHEBI:18420"/>
    </ligand>
</feature>
<feature type="binding site" evidence="1">
    <location>
        <begin position="213"/>
        <end position="216"/>
    </location>
    <ligand>
        <name>GTP</name>
        <dbReference type="ChEBI" id="CHEBI:37565"/>
    </ligand>
</feature>
<feature type="binding site" evidence="1">
    <location>
        <begin position="284"/>
        <end position="287"/>
    </location>
    <ligand>
        <name>GTP</name>
        <dbReference type="ChEBI" id="CHEBI:37565"/>
    </ligand>
</feature>
<feature type="binding site" evidence="1">
    <location>
        <begin position="315"/>
        <end position="317"/>
    </location>
    <ligand>
        <name>GTP</name>
        <dbReference type="ChEBI" id="CHEBI:37565"/>
    </ligand>
</feature>
<dbReference type="EC" id="3.6.5.-" evidence="1"/>
<dbReference type="EMBL" id="CP000103">
    <property type="protein sequence ID" value="ABB75114.1"/>
    <property type="molecule type" value="Genomic_DNA"/>
</dbReference>
<dbReference type="RefSeq" id="WP_011381134.1">
    <property type="nucleotide sequence ID" value="NC_007614.1"/>
</dbReference>
<dbReference type="SMR" id="Q2Y807"/>
<dbReference type="STRING" id="323848.Nmul_A1817"/>
<dbReference type="KEGG" id="nmu:Nmul_A1817"/>
<dbReference type="eggNOG" id="COG0536">
    <property type="taxonomic scope" value="Bacteria"/>
</dbReference>
<dbReference type="HOGENOM" id="CLU_011747_2_0_4"/>
<dbReference type="OrthoDB" id="9807318at2"/>
<dbReference type="Proteomes" id="UP000002718">
    <property type="component" value="Chromosome"/>
</dbReference>
<dbReference type="GO" id="GO:0005737">
    <property type="term" value="C:cytoplasm"/>
    <property type="evidence" value="ECO:0007669"/>
    <property type="project" value="UniProtKB-SubCell"/>
</dbReference>
<dbReference type="GO" id="GO:0005525">
    <property type="term" value="F:GTP binding"/>
    <property type="evidence" value="ECO:0007669"/>
    <property type="project" value="UniProtKB-UniRule"/>
</dbReference>
<dbReference type="GO" id="GO:0003924">
    <property type="term" value="F:GTPase activity"/>
    <property type="evidence" value="ECO:0007669"/>
    <property type="project" value="UniProtKB-UniRule"/>
</dbReference>
<dbReference type="GO" id="GO:0000287">
    <property type="term" value="F:magnesium ion binding"/>
    <property type="evidence" value="ECO:0007669"/>
    <property type="project" value="InterPro"/>
</dbReference>
<dbReference type="GO" id="GO:0042254">
    <property type="term" value="P:ribosome biogenesis"/>
    <property type="evidence" value="ECO:0007669"/>
    <property type="project" value="UniProtKB-UniRule"/>
</dbReference>
<dbReference type="CDD" id="cd01898">
    <property type="entry name" value="Obg"/>
    <property type="match status" value="1"/>
</dbReference>
<dbReference type="FunFam" id="2.70.210.12:FF:000001">
    <property type="entry name" value="GTPase Obg"/>
    <property type="match status" value="1"/>
</dbReference>
<dbReference type="Gene3D" id="2.70.210.12">
    <property type="entry name" value="GTP1/OBG domain"/>
    <property type="match status" value="1"/>
</dbReference>
<dbReference type="Gene3D" id="3.40.50.300">
    <property type="entry name" value="P-loop containing nucleotide triphosphate hydrolases"/>
    <property type="match status" value="1"/>
</dbReference>
<dbReference type="HAMAP" id="MF_01454">
    <property type="entry name" value="GTPase_Obg"/>
    <property type="match status" value="1"/>
</dbReference>
<dbReference type="InterPro" id="IPR031167">
    <property type="entry name" value="G_OBG"/>
</dbReference>
<dbReference type="InterPro" id="IPR006073">
    <property type="entry name" value="GTP-bd"/>
</dbReference>
<dbReference type="InterPro" id="IPR014100">
    <property type="entry name" value="GTP-bd_Obg/CgtA"/>
</dbReference>
<dbReference type="InterPro" id="IPR006074">
    <property type="entry name" value="GTP1-OBG_CS"/>
</dbReference>
<dbReference type="InterPro" id="IPR006169">
    <property type="entry name" value="GTP1_OBG_dom"/>
</dbReference>
<dbReference type="InterPro" id="IPR036726">
    <property type="entry name" value="GTP1_OBG_dom_sf"/>
</dbReference>
<dbReference type="InterPro" id="IPR045086">
    <property type="entry name" value="OBG_GTPase"/>
</dbReference>
<dbReference type="InterPro" id="IPR027417">
    <property type="entry name" value="P-loop_NTPase"/>
</dbReference>
<dbReference type="NCBIfam" id="TIGR02729">
    <property type="entry name" value="Obg_CgtA"/>
    <property type="match status" value="1"/>
</dbReference>
<dbReference type="NCBIfam" id="NF008955">
    <property type="entry name" value="PRK12297.1"/>
    <property type="match status" value="1"/>
</dbReference>
<dbReference type="NCBIfam" id="NF008956">
    <property type="entry name" value="PRK12299.1"/>
    <property type="match status" value="1"/>
</dbReference>
<dbReference type="PANTHER" id="PTHR11702">
    <property type="entry name" value="DEVELOPMENTALLY REGULATED GTP-BINDING PROTEIN-RELATED"/>
    <property type="match status" value="1"/>
</dbReference>
<dbReference type="PANTHER" id="PTHR11702:SF31">
    <property type="entry name" value="MITOCHONDRIAL RIBOSOME-ASSOCIATED GTPASE 2"/>
    <property type="match status" value="1"/>
</dbReference>
<dbReference type="Pfam" id="PF01018">
    <property type="entry name" value="GTP1_OBG"/>
    <property type="match status" value="1"/>
</dbReference>
<dbReference type="Pfam" id="PF01926">
    <property type="entry name" value="MMR_HSR1"/>
    <property type="match status" value="1"/>
</dbReference>
<dbReference type="PIRSF" id="PIRSF002401">
    <property type="entry name" value="GTP_bd_Obg/CgtA"/>
    <property type="match status" value="1"/>
</dbReference>
<dbReference type="PRINTS" id="PR00326">
    <property type="entry name" value="GTP1OBG"/>
</dbReference>
<dbReference type="SUPFAM" id="SSF82051">
    <property type="entry name" value="Obg GTP-binding protein N-terminal domain"/>
    <property type="match status" value="1"/>
</dbReference>
<dbReference type="SUPFAM" id="SSF52540">
    <property type="entry name" value="P-loop containing nucleoside triphosphate hydrolases"/>
    <property type="match status" value="1"/>
</dbReference>
<dbReference type="PROSITE" id="PS51710">
    <property type="entry name" value="G_OBG"/>
    <property type="match status" value="1"/>
</dbReference>
<dbReference type="PROSITE" id="PS00905">
    <property type="entry name" value="GTP1_OBG"/>
    <property type="match status" value="1"/>
</dbReference>
<dbReference type="PROSITE" id="PS51883">
    <property type="entry name" value="OBG"/>
    <property type="match status" value="1"/>
</dbReference>
<name>OBG_NITMU</name>
<proteinExistence type="inferred from homology"/>
<evidence type="ECO:0000255" key="1">
    <source>
        <dbReference type="HAMAP-Rule" id="MF_01454"/>
    </source>
</evidence>
<evidence type="ECO:0000255" key="2">
    <source>
        <dbReference type="PROSITE-ProRule" id="PRU01231"/>
    </source>
</evidence>
<protein>
    <recommendedName>
        <fullName evidence="1">GTPase Obg</fullName>
        <ecNumber evidence="1">3.6.5.-</ecNumber>
    </recommendedName>
    <alternativeName>
        <fullName evidence="1">GTP-binding protein Obg</fullName>
    </alternativeName>
</protein>
<keyword id="KW-0963">Cytoplasm</keyword>
<keyword id="KW-0342">GTP-binding</keyword>
<keyword id="KW-0378">Hydrolase</keyword>
<keyword id="KW-0460">Magnesium</keyword>
<keyword id="KW-0479">Metal-binding</keyword>
<keyword id="KW-0547">Nucleotide-binding</keyword>
<keyword id="KW-1185">Reference proteome</keyword>
<sequence>MKYIDEAIIHVIAGKGGDGVAAFRREKYIPKGGPSGGDGGRGGSIYAMADRNINTLVDYRFARIHRAKNGENGQGSDRYGKSAHDIVLRMPVGTVITNEATGERVADLVQHDQKILLAKGGTGGLGNLHFKSSTNRTPRQFTLGEPGEEADLKLELKVLADVGLLGMPNAGKSTLIRAISAARPKVADYPFTTMHPALGVVRVDQNRSFVMADIPGLIEGAAEGAGLGHRFLKHLARTRLLLHVVDIAPLDEAIDPVYEAKAILEELRKYDEALYRKPRWLVLNKVDLLPENEREKICKKFIRSLRWKDKNFAISAMTGDGCKELTYAIMEFLERESMDENQERATFAEPDTSD</sequence>